<proteinExistence type="inferred from homology"/>
<feature type="chain" id="PRO_0000253649" description="UDP-3-O-acyl-N-acetylglucosamine deacetylase">
    <location>
        <begin position="1"/>
        <end position="307"/>
    </location>
</feature>
<feature type="active site" description="Proton donor" evidence="1">
    <location>
        <position position="268"/>
    </location>
</feature>
<feature type="binding site" evidence="1">
    <location>
        <position position="78"/>
    </location>
    <ligand>
        <name>Zn(2+)</name>
        <dbReference type="ChEBI" id="CHEBI:29105"/>
    </ligand>
</feature>
<feature type="binding site" evidence="1">
    <location>
        <position position="241"/>
    </location>
    <ligand>
        <name>Zn(2+)</name>
        <dbReference type="ChEBI" id="CHEBI:29105"/>
    </ligand>
</feature>
<feature type="binding site" evidence="1">
    <location>
        <position position="245"/>
    </location>
    <ligand>
        <name>Zn(2+)</name>
        <dbReference type="ChEBI" id="CHEBI:29105"/>
    </ligand>
</feature>
<evidence type="ECO:0000255" key="1">
    <source>
        <dbReference type="HAMAP-Rule" id="MF_00388"/>
    </source>
</evidence>
<protein>
    <recommendedName>
        <fullName evidence="1">UDP-3-O-acyl-N-acetylglucosamine deacetylase</fullName>
        <shortName evidence="1">UDP-3-O-acyl-GlcNAc deacetylase</shortName>
        <ecNumber evidence="1">3.5.1.108</ecNumber>
    </recommendedName>
    <alternativeName>
        <fullName evidence="1">UDP-3-O-[R-3-hydroxymyristoyl]-N-acetylglucosamine deacetylase</fullName>
    </alternativeName>
</protein>
<comment type="function">
    <text evidence="1">Catalyzes the hydrolysis of UDP-3-O-myristoyl-N-acetylglucosamine to form UDP-3-O-myristoylglucosamine and acetate, the committed step in lipid A biosynthesis.</text>
</comment>
<comment type="catalytic activity">
    <reaction evidence="1">
        <text>a UDP-3-O-[(3R)-3-hydroxyacyl]-N-acetyl-alpha-D-glucosamine + H2O = a UDP-3-O-[(3R)-3-hydroxyacyl]-alpha-D-glucosamine + acetate</text>
        <dbReference type="Rhea" id="RHEA:67816"/>
        <dbReference type="ChEBI" id="CHEBI:15377"/>
        <dbReference type="ChEBI" id="CHEBI:30089"/>
        <dbReference type="ChEBI" id="CHEBI:137740"/>
        <dbReference type="ChEBI" id="CHEBI:173225"/>
        <dbReference type="EC" id="3.5.1.108"/>
    </reaction>
</comment>
<comment type="cofactor">
    <cofactor evidence="1">
        <name>Zn(2+)</name>
        <dbReference type="ChEBI" id="CHEBI:29105"/>
    </cofactor>
</comment>
<comment type="pathway">
    <text evidence="1">Glycolipid biosynthesis; lipid IV(A) biosynthesis; lipid IV(A) from (3R)-3-hydroxytetradecanoyl-[acyl-carrier-protein] and UDP-N-acetyl-alpha-D-glucosamine: step 2/6.</text>
</comment>
<comment type="similarity">
    <text evidence="1">Belongs to the LpxC family.</text>
</comment>
<sequence length="307" mass="34156">MFRQRSIQNLVRTIGVGVHSGRRVELTLRPAEANTGIVFHRVDLPQVVDLPASAIGVGDTRMASVLQQGNVRVSTVEHLMSALAGLGIDNLHVDLTAEEVPIMDGSAATFVYLLRSAGIVEQNAPKRFIRVLKPIEVREGEGRNEKWARLEPHEGFALAFSIDFRHPAIDSTANFAEIDFATHSYVREIARARTFGFVNEVEALRSMGLARGGSLDNAIVMDEFRVLNSDGLRYDDEFVKHKILDAIGDLYLLGKPLVARYVAYKSGHALNNQLARALLEQQDAWELVTYESQAEAPQAFRHEWKLA</sequence>
<name>LPXC_BORPE</name>
<accession>Q7VUQ9</accession>
<gene>
    <name evidence="1" type="primary">lpxC</name>
    <name type="ordered locus">BP3017</name>
</gene>
<keyword id="KW-0378">Hydrolase</keyword>
<keyword id="KW-0441">Lipid A biosynthesis</keyword>
<keyword id="KW-0444">Lipid biosynthesis</keyword>
<keyword id="KW-0443">Lipid metabolism</keyword>
<keyword id="KW-0479">Metal-binding</keyword>
<keyword id="KW-1185">Reference proteome</keyword>
<keyword id="KW-0862">Zinc</keyword>
<organism>
    <name type="scientific">Bordetella pertussis (strain Tohama I / ATCC BAA-589 / NCTC 13251)</name>
    <dbReference type="NCBI Taxonomy" id="257313"/>
    <lineage>
        <taxon>Bacteria</taxon>
        <taxon>Pseudomonadati</taxon>
        <taxon>Pseudomonadota</taxon>
        <taxon>Betaproteobacteria</taxon>
        <taxon>Burkholderiales</taxon>
        <taxon>Alcaligenaceae</taxon>
        <taxon>Bordetella</taxon>
    </lineage>
</organism>
<dbReference type="EC" id="3.5.1.108" evidence="1"/>
<dbReference type="EMBL" id="BX640420">
    <property type="protein sequence ID" value="CAE43288.1"/>
    <property type="molecule type" value="Genomic_DNA"/>
</dbReference>
<dbReference type="RefSeq" id="NP_881592.1">
    <property type="nucleotide sequence ID" value="NC_002929.2"/>
</dbReference>
<dbReference type="RefSeq" id="WP_003814567.1">
    <property type="nucleotide sequence ID" value="NZ_CP039022.1"/>
</dbReference>
<dbReference type="SMR" id="Q7VUQ9"/>
<dbReference type="STRING" id="257313.BP3017"/>
<dbReference type="PaxDb" id="257313-BP3017"/>
<dbReference type="GeneID" id="93205535"/>
<dbReference type="KEGG" id="bpe:BP3017"/>
<dbReference type="PATRIC" id="fig|257313.5.peg.3263"/>
<dbReference type="eggNOG" id="COG0774">
    <property type="taxonomic scope" value="Bacteria"/>
</dbReference>
<dbReference type="HOGENOM" id="CLU_046528_1_0_4"/>
<dbReference type="UniPathway" id="UPA00359">
    <property type="reaction ID" value="UER00478"/>
</dbReference>
<dbReference type="Proteomes" id="UP000002676">
    <property type="component" value="Chromosome"/>
</dbReference>
<dbReference type="GO" id="GO:0016020">
    <property type="term" value="C:membrane"/>
    <property type="evidence" value="ECO:0007669"/>
    <property type="project" value="GOC"/>
</dbReference>
<dbReference type="GO" id="GO:0046872">
    <property type="term" value="F:metal ion binding"/>
    <property type="evidence" value="ECO:0007669"/>
    <property type="project" value="UniProtKB-KW"/>
</dbReference>
<dbReference type="GO" id="GO:0103117">
    <property type="term" value="F:UDP-3-O-acyl-N-acetylglucosamine deacetylase activity"/>
    <property type="evidence" value="ECO:0007669"/>
    <property type="project" value="UniProtKB-UniRule"/>
</dbReference>
<dbReference type="GO" id="GO:0009245">
    <property type="term" value="P:lipid A biosynthetic process"/>
    <property type="evidence" value="ECO:0007669"/>
    <property type="project" value="UniProtKB-UniRule"/>
</dbReference>
<dbReference type="Gene3D" id="3.30.230.20">
    <property type="entry name" value="lpxc deacetylase, domain 1"/>
    <property type="match status" value="1"/>
</dbReference>
<dbReference type="Gene3D" id="3.30.1700.10">
    <property type="entry name" value="lpxc deacetylase, domain 2"/>
    <property type="match status" value="1"/>
</dbReference>
<dbReference type="HAMAP" id="MF_00388">
    <property type="entry name" value="LpxC"/>
    <property type="match status" value="1"/>
</dbReference>
<dbReference type="InterPro" id="IPR020568">
    <property type="entry name" value="Ribosomal_Su5_D2-typ_SF"/>
</dbReference>
<dbReference type="InterPro" id="IPR004463">
    <property type="entry name" value="UDP-acyl_GlcNac_deAcase"/>
</dbReference>
<dbReference type="InterPro" id="IPR011334">
    <property type="entry name" value="UDP-acyl_GlcNac_deAcase_C"/>
</dbReference>
<dbReference type="InterPro" id="IPR015870">
    <property type="entry name" value="UDP-acyl_N-AcGlcN_deAcase_N"/>
</dbReference>
<dbReference type="NCBIfam" id="TIGR00325">
    <property type="entry name" value="lpxC"/>
    <property type="match status" value="1"/>
</dbReference>
<dbReference type="PANTHER" id="PTHR33694">
    <property type="entry name" value="UDP-3-O-ACYL-N-ACETYLGLUCOSAMINE DEACETYLASE 1, MITOCHONDRIAL-RELATED"/>
    <property type="match status" value="1"/>
</dbReference>
<dbReference type="PANTHER" id="PTHR33694:SF1">
    <property type="entry name" value="UDP-3-O-ACYL-N-ACETYLGLUCOSAMINE DEACETYLASE 1, MITOCHONDRIAL-RELATED"/>
    <property type="match status" value="1"/>
</dbReference>
<dbReference type="Pfam" id="PF03331">
    <property type="entry name" value="LpxC"/>
    <property type="match status" value="1"/>
</dbReference>
<dbReference type="SUPFAM" id="SSF54211">
    <property type="entry name" value="Ribosomal protein S5 domain 2-like"/>
    <property type="match status" value="2"/>
</dbReference>
<reference key="1">
    <citation type="journal article" date="2003" name="Nat. Genet.">
        <title>Comparative analysis of the genome sequences of Bordetella pertussis, Bordetella parapertussis and Bordetella bronchiseptica.</title>
        <authorList>
            <person name="Parkhill J."/>
            <person name="Sebaihia M."/>
            <person name="Preston A."/>
            <person name="Murphy L.D."/>
            <person name="Thomson N.R."/>
            <person name="Harris D.E."/>
            <person name="Holden M.T.G."/>
            <person name="Churcher C.M."/>
            <person name="Bentley S.D."/>
            <person name="Mungall K.L."/>
            <person name="Cerdeno-Tarraga A.-M."/>
            <person name="Temple L."/>
            <person name="James K.D."/>
            <person name="Harris B."/>
            <person name="Quail M.A."/>
            <person name="Achtman M."/>
            <person name="Atkin R."/>
            <person name="Baker S."/>
            <person name="Basham D."/>
            <person name="Bason N."/>
            <person name="Cherevach I."/>
            <person name="Chillingworth T."/>
            <person name="Collins M."/>
            <person name="Cronin A."/>
            <person name="Davis P."/>
            <person name="Doggett J."/>
            <person name="Feltwell T."/>
            <person name="Goble A."/>
            <person name="Hamlin N."/>
            <person name="Hauser H."/>
            <person name="Holroyd S."/>
            <person name="Jagels K."/>
            <person name="Leather S."/>
            <person name="Moule S."/>
            <person name="Norberczak H."/>
            <person name="O'Neil S."/>
            <person name="Ormond D."/>
            <person name="Price C."/>
            <person name="Rabbinowitsch E."/>
            <person name="Rutter S."/>
            <person name="Sanders M."/>
            <person name="Saunders D."/>
            <person name="Seeger K."/>
            <person name="Sharp S."/>
            <person name="Simmonds M."/>
            <person name="Skelton J."/>
            <person name="Squares R."/>
            <person name="Squares S."/>
            <person name="Stevens K."/>
            <person name="Unwin L."/>
            <person name="Whitehead S."/>
            <person name="Barrell B.G."/>
            <person name="Maskell D.J."/>
        </authorList>
    </citation>
    <scope>NUCLEOTIDE SEQUENCE [LARGE SCALE GENOMIC DNA]</scope>
    <source>
        <strain>Tohama I / ATCC BAA-589 / NCTC 13251</strain>
    </source>
</reference>